<feature type="chain" id="PRO_0000193838" description="Coatomer subunit beta">
    <location>
        <begin position="1"/>
        <end position="940"/>
    </location>
</feature>
<feature type="repeat" description="HEAT 1">
    <location>
        <begin position="11"/>
        <end position="48"/>
    </location>
</feature>
<feature type="repeat" description="HEAT 2">
    <location>
        <begin position="90"/>
        <end position="125"/>
    </location>
</feature>
<feature type="repeat" description="HEAT 3">
    <location>
        <begin position="126"/>
        <end position="162"/>
    </location>
</feature>
<feature type="repeat" description="HEAT 4">
    <location>
        <begin position="310"/>
        <end position="347"/>
    </location>
</feature>
<organism>
    <name type="scientific">Schizosaccharomyces pombe (strain 972 / ATCC 24843)</name>
    <name type="common">Fission yeast</name>
    <dbReference type="NCBI Taxonomy" id="284812"/>
    <lineage>
        <taxon>Eukaryota</taxon>
        <taxon>Fungi</taxon>
        <taxon>Dikarya</taxon>
        <taxon>Ascomycota</taxon>
        <taxon>Taphrinomycotina</taxon>
        <taxon>Schizosaccharomycetes</taxon>
        <taxon>Schizosaccharomycetales</taxon>
        <taxon>Schizosaccharomycetaceae</taxon>
        <taxon>Schizosaccharomyces</taxon>
    </lineage>
</organism>
<keyword id="KW-0963">Cytoplasm</keyword>
<keyword id="KW-0968">Cytoplasmic vesicle</keyword>
<keyword id="KW-0931">ER-Golgi transport</keyword>
<keyword id="KW-0333">Golgi apparatus</keyword>
<keyword id="KW-0472">Membrane</keyword>
<keyword id="KW-0653">Protein transport</keyword>
<keyword id="KW-1185">Reference proteome</keyword>
<keyword id="KW-0677">Repeat</keyword>
<keyword id="KW-0813">Transport</keyword>
<dbReference type="EMBL" id="CU329671">
    <property type="protein sequence ID" value="CAB46767.1"/>
    <property type="molecule type" value="Genomic_DNA"/>
</dbReference>
<dbReference type="PIR" id="T39428">
    <property type="entry name" value="T39428"/>
</dbReference>
<dbReference type="RefSeq" id="NP_595403.1">
    <property type="nucleotide sequence ID" value="NM_001021310.2"/>
</dbReference>
<dbReference type="SMR" id="Q9UUF7"/>
<dbReference type="BioGRID" id="276348">
    <property type="interactions" value="9"/>
</dbReference>
<dbReference type="FunCoup" id="Q9UUF7">
    <property type="interactions" value="762"/>
</dbReference>
<dbReference type="STRING" id="284812.Q9UUF7"/>
<dbReference type="iPTMnet" id="Q9UUF7"/>
<dbReference type="PaxDb" id="4896-SPBC146.14c.1"/>
<dbReference type="EnsemblFungi" id="SPBC146.14c.1">
    <property type="protein sequence ID" value="SPBC146.14c.1:pep"/>
    <property type="gene ID" value="SPBC146.14c"/>
</dbReference>
<dbReference type="GeneID" id="2539798"/>
<dbReference type="KEGG" id="spo:2539798"/>
<dbReference type="PomBase" id="SPBC146.14c">
    <property type="gene designation" value="sec26"/>
</dbReference>
<dbReference type="VEuPathDB" id="FungiDB:SPBC146.14c"/>
<dbReference type="eggNOG" id="KOG1058">
    <property type="taxonomic scope" value="Eukaryota"/>
</dbReference>
<dbReference type="HOGENOM" id="CLU_006949_0_0_1"/>
<dbReference type="InParanoid" id="Q9UUF7"/>
<dbReference type="OMA" id="IYKNFDW"/>
<dbReference type="PhylomeDB" id="Q9UUF7"/>
<dbReference type="Reactome" id="R-SPO-6798695">
    <property type="pathway name" value="Neutrophil degranulation"/>
</dbReference>
<dbReference type="Reactome" id="R-SPO-6807878">
    <property type="pathway name" value="COPI-mediated anterograde transport"/>
</dbReference>
<dbReference type="Reactome" id="R-SPO-6811434">
    <property type="pathway name" value="COPI-dependent Golgi-to-ER retrograde traffic"/>
</dbReference>
<dbReference type="PRO" id="PR:Q9UUF7"/>
<dbReference type="Proteomes" id="UP000002485">
    <property type="component" value="Chromosome II"/>
</dbReference>
<dbReference type="GO" id="GO:0030126">
    <property type="term" value="C:COPI vesicle coat"/>
    <property type="evidence" value="ECO:0000318"/>
    <property type="project" value="GO_Central"/>
</dbReference>
<dbReference type="GO" id="GO:0030134">
    <property type="term" value="C:COPII-coated ER to Golgi transport vesicle"/>
    <property type="evidence" value="ECO:0000305"/>
    <property type="project" value="PomBase"/>
</dbReference>
<dbReference type="GO" id="GO:0005829">
    <property type="term" value="C:cytosol"/>
    <property type="evidence" value="ECO:0007005"/>
    <property type="project" value="PomBase"/>
</dbReference>
<dbReference type="GO" id="GO:0000139">
    <property type="term" value="C:Golgi membrane"/>
    <property type="evidence" value="ECO:0007669"/>
    <property type="project" value="UniProtKB-SubCell"/>
</dbReference>
<dbReference type="GO" id="GO:0005198">
    <property type="term" value="F:structural molecule activity"/>
    <property type="evidence" value="ECO:0007669"/>
    <property type="project" value="InterPro"/>
</dbReference>
<dbReference type="GO" id="GO:0006888">
    <property type="term" value="P:endoplasmic reticulum to Golgi vesicle-mediated transport"/>
    <property type="evidence" value="ECO:0000318"/>
    <property type="project" value="GO_Central"/>
</dbReference>
<dbReference type="GO" id="GO:0006891">
    <property type="term" value="P:intra-Golgi vesicle-mediated transport"/>
    <property type="evidence" value="ECO:0000318"/>
    <property type="project" value="GO_Central"/>
</dbReference>
<dbReference type="GO" id="GO:0006886">
    <property type="term" value="P:intracellular protein transport"/>
    <property type="evidence" value="ECO:0000303"/>
    <property type="project" value="PomBase"/>
</dbReference>
<dbReference type="FunFam" id="1.25.10.10:FF:000444">
    <property type="entry name" value="Coatomer subunit beta"/>
    <property type="match status" value="1"/>
</dbReference>
<dbReference type="Gene3D" id="1.25.10.10">
    <property type="entry name" value="Leucine-rich Repeat Variant"/>
    <property type="match status" value="1"/>
</dbReference>
<dbReference type="InterPro" id="IPR011989">
    <property type="entry name" value="ARM-like"/>
</dbReference>
<dbReference type="InterPro" id="IPR016024">
    <property type="entry name" value="ARM-type_fold"/>
</dbReference>
<dbReference type="InterPro" id="IPR002553">
    <property type="entry name" value="Clathrin/coatomer_adapt-like_N"/>
</dbReference>
<dbReference type="InterPro" id="IPR011710">
    <property type="entry name" value="Coatomer_bsu_C"/>
</dbReference>
<dbReference type="InterPro" id="IPR016460">
    <property type="entry name" value="COPB1"/>
</dbReference>
<dbReference type="InterPro" id="IPR029446">
    <property type="entry name" value="COPB1_appendage_platform_dom"/>
</dbReference>
<dbReference type="PANTHER" id="PTHR10635">
    <property type="entry name" value="COATOMER SUBUNIT BETA"/>
    <property type="match status" value="1"/>
</dbReference>
<dbReference type="PANTHER" id="PTHR10635:SF0">
    <property type="entry name" value="COATOMER SUBUNIT BETA"/>
    <property type="match status" value="1"/>
</dbReference>
<dbReference type="Pfam" id="PF01602">
    <property type="entry name" value="Adaptin_N"/>
    <property type="match status" value="1"/>
</dbReference>
<dbReference type="Pfam" id="PF07718">
    <property type="entry name" value="Coatamer_beta_C"/>
    <property type="match status" value="1"/>
</dbReference>
<dbReference type="Pfam" id="PF14806">
    <property type="entry name" value="Coatomer_b_Cpla"/>
    <property type="match status" value="1"/>
</dbReference>
<dbReference type="PIRSF" id="PIRSF005727">
    <property type="entry name" value="Coatomer_beta_subunit"/>
    <property type="match status" value="1"/>
</dbReference>
<dbReference type="SUPFAM" id="SSF48371">
    <property type="entry name" value="ARM repeat"/>
    <property type="match status" value="1"/>
</dbReference>
<sequence>MSCWTLVQQDFLEAPSVDALKTSLESKNDYVKISAMKTILRVVINGDSLPSILMHVIRFVMPSRNKELKKLLYYYWEVCPKYNNDGTMKQEMILACNSFRNDLQHPNEFIRGATLRFLCKLKEPELLDPLIPTVRQCLEHRHAYVRKNAILAVFSIYQVSNHLIPDAASLAEDFLAAESEGTCKRNALIVLFTIDPEKAKAWLLANFEQIPSLNASSLLVIIEFIRKVVLTKADGLEKLRFQSLLVSLTATNNSSVVFEAATSVINVFPDAESLKLAASRLLALADREADNNAKLIMLDRISQLAARDKSILEDLITDVIPFLSSSDFDVCEKAISIIMGLVSSRNVEDILNHFQKELTKSNGETEKDDGRRRALTKAIHSCAINFPHTAATAIQYLLSHISDFQSKSASSVLSFIKEVMEKFPDLRSSNITKLLLSLKELRAGKIFRGVIWIAGEYCLTEDDIRVAWKSIRASLGEVPILASEEQLLKDVSNVPEDDLLIDISAPASTSRKVLPDGTYATESAVTSEALSAARLEAVKASKKPPLRTQILSGDYYLAAVLASALTKLVMRFARLSFDKERLNALKAEACLIMTSIIRVGQSKFVKYTIDDDSVERIMNCIRAIYSFEELPEFQTVFLDDMRKAFSSLVAQSDKRQKEADLLVNGSDAVQADELLNIRQFQRVIEEKQDLNFESDIIQATNDGMVVEDLASKLDHIVQLAGFTDPVYCEAYVKIQQFDIILDILLVNRTDTTLQNLSVDLATLGDLKVVERPPPMNLGPHAFKSVQATVKVSSTESAVIFGNIVYGGKASDEDKIVVLNGIPVNIIDYIKPAFIPESQFRSMWTEFEWENKVDISSNEDISLYDFLHKIMKKTNMNCLTPDASLRGDCGFLSANLYACSIFGEDALMSLSVEKSVSGPISGHVRIRSKTQGIALSLGAFV</sequence>
<accession>Q9UUF7</accession>
<accession>O74812</accession>
<gene>
    <name type="primary">sec26</name>
    <name type="ORF">SPBC146.14c</name>
    <name type="ORF">SPBC337.01c</name>
</gene>
<protein>
    <recommendedName>
        <fullName>Coatomer subunit beta</fullName>
    </recommendedName>
    <alternativeName>
        <fullName>Beta-coat protein</fullName>
        <shortName>Beta-COP</shortName>
    </alternativeName>
</protein>
<proteinExistence type="inferred from homology"/>
<comment type="function">
    <text evidence="1">The coatomer is a cytosolic protein complex that binds to dilysine motifs and reversibly associates with Golgi non-clathrin-coated vesicles, which further mediate biosynthetic protein transport from the ER, via the Golgi up to the trans Golgi network. Coatomer complex is required for budding from Golgi membranes, and is essential for the retrograde Golgi-to-ER transport of dilysine-tagged proteins (By similarity).</text>
</comment>
<comment type="subunit">
    <text evidence="1">Oligomeric complex that consists of at least the alpha, beta, beta', gamma, delta, epsilon and zeta subunits.</text>
</comment>
<comment type="subcellular location">
    <subcellularLocation>
        <location evidence="2">Cytoplasm</location>
    </subcellularLocation>
    <subcellularLocation>
        <location evidence="1">Golgi apparatus membrane</location>
        <topology evidence="1">Peripheral membrane protein</topology>
        <orientation evidence="1">Cytoplasmic side</orientation>
    </subcellularLocation>
    <subcellularLocation>
        <location evidence="1">Cytoplasmic vesicle</location>
        <location evidence="1">COPI-coated vesicle membrane</location>
        <topology evidence="1">Peripheral membrane protein</topology>
        <orientation evidence="1">Cytoplasmic side</orientation>
    </subcellularLocation>
    <text evidence="1">The coatomer is cytoplasmic or polymerized on the cytoplasmic side of the Golgi, as well as on the vesicles/buds originating from it.</text>
</comment>
<evidence type="ECO:0000250" key="1"/>
<evidence type="ECO:0000269" key="2">
    <source>
    </source>
</evidence>
<reference key="1">
    <citation type="journal article" date="2002" name="Nature">
        <title>The genome sequence of Schizosaccharomyces pombe.</title>
        <authorList>
            <person name="Wood V."/>
            <person name="Gwilliam R."/>
            <person name="Rajandream M.A."/>
            <person name="Lyne M.H."/>
            <person name="Lyne R."/>
            <person name="Stewart A."/>
            <person name="Sgouros J.G."/>
            <person name="Peat N."/>
            <person name="Hayles J."/>
            <person name="Baker S.G."/>
            <person name="Basham D."/>
            <person name="Bowman S."/>
            <person name="Brooks K."/>
            <person name="Brown D."/>
            <person name="Brown S."/>
            <person name="Chillingworth T."/>
            <person name="Churcher C.M."/>
            <person name="Collins M."/>
            <person name="Connor R."/>
            <person name="Cronin A."/>
            <person name="Davis P."/>
            <person name="Feltwell T."/>
            <person name="Fraser A."/>
            <person name="Gentles S."/>
            <person name="Goble A."/>
            <person name="Hamlin N."/>
            <person name="Harris D.E."/>
            <person name="Hidalgo J."/>
            <person name="Hodgson G."/>
            <person name="Holroyd S."/>
            <person name="Hornsby T."/>
            <person name="Howarth S."/>
            <person name="Huckle E.J."/>
            <person name="Hunt S."/>
            <person name="Jagels K."/>
            <person name="James K.D."/>
            <person name="Jones L."/>
            <person name="Jones M."/>
            <person name="Leather S."/>
            <person name="McDonald S."/>
            <person name="McLean J."/>
            <person name="Mooney P."/>
            <person name="Moule S."/>
            <person name="Mungall K.L."/>
            <person name="Murphy L.D."/>
            <person name="Niblett D."/>
            <person name="Odell C."/>
            <person name="Oliver K."/>
            <person name="O'Neil S."/>
            <person name="Pearson D."/>
            <person name="Quail M.A."/>
            <person name="Rabbinowitsch E."/>
            <person name="Rutherford K.M."/>
            <person name="Rutter S."/>
            <person name="Saunders D."/>
            <person name="Seeger K."/>
            <person name="Sharp S."/>
            <person name="Skelton J."/>
            <person name="Simmonds M.N."/>
            <person name="Squares R."/>
            <person name="Squares S."/>
            <person name="Stevens K."/>
            <person name="Taylor K."/>
            <person name="Taylor R.G."/>
            <person name="Tivey A."/>
            <person name="Walsh S.V."/>
            <person name="Warren T."/>
            <person name="Whitehead S."/>
            <person name="Woodward J.R."/>
            <person name="Volckaert G."/>
            <person name="Aert R."/>
            <person name="Robben J."/>
            <person name="Grymonprez B."/>
            <person name="Weltjens I."/>
            <person name="Vanstreels E."/>
            <person name="Rieger M."/>
            <person name="Schaefer M."/>
            <person name="Mueller-Auer S."/>
            <person name="Gabel C."/>
            <person name="Fuchs M."/>
            <person name="Duesterhoeft A."/>
            <person name="Fritzc C."/>
            <person name="Holzer E."/>
            <person name="Moestl D."/>
            <person name="Hilbert H."/>
            <person name="Borzym K."/>
            <person name="Langer I."/>
            <person name="Beck A."/>
            <person name="Lehrach H."/>
            <person name="Reinhardt R."/>
            <person name="Pohl T.M."/>
            <person name="Eger P."/>
            <person name="Zimmermann W."/>
            <person name="Wedler H."/>
            <person name="Wambutt R."/>
            <person name="Purnelle B."/>
            <person name="Goffeau A."/>
            <person name="Cadieu E."/>
            <person name="Dreano S."/>
            <person name="Gloux S."/>
            <person name="Lelaure V."/>
            <person name="Mottier S."/>
            <person name="Galibert F."/>
            <person name="Aves S.J."/>
            <person name="Xiang Z."/>
            <person name="Hunt C."/>
            <person name="Moore K."/>
            <person name="Hurst S.M."/>
            <person name="Lucas M."/>
            <person name="Rochet M."/>
            <person name="Gaillardin C."/>
            <person name="Tallada V.A."/>
            <person name="Garzon A."/>
            <person name="Thode G."/>
            <person name="Daga R.R."/>
            <person name="Cruzado L."/>
            <person name="Jimenez J."/>
            <person name="Sanchez M."/>
            <person name="del Rey F."/>
            <person name="Benito J."/>
            <person name="Dominguez A."/>
            <person name="Revuelta J.L."/>
            <person name="Moreno S."/>
            <person name="Armstrong J."/>
            <person name="Forsburg S.L."/>
            <person name="Cerutti L."/>
            <person name="Lowe T."/>
            <person name="McCombie W.R."/>
            <person name="Paulsen I."/>
            <person name="Potashkin J."/>
            <person name="Shpakovski G.V."/>
            <person name="Ussery D."/>
            <person name="Barrell B.G."/>
            <person name="Nurse P."/>
        </authorList>
    </citation>
    <scope>NUCLEOTIDE SEQUENCE [LARGE SCALE GENOMIC DNA]</scope>
    <source>
        <strain>972 / ATCC 24843</strain>
    </source>
</reference>
<reference key="2">
    <citation type="journal article" date="2006" name="Nat. Biotechnol.">
        <title>ORFeome cloning and global analysis of protein localization in the fission yeast Schizosaccharomyces pombe.</title>
        <authorList>
            <person name="Matsuyama A."/>
            <person name="Arai R."/>
            <person name="Yashiroda Y."/>
            <person name="Shirai A."/>
            <person name="Kamata A."/>
            <person name="Sekido S."/>
            <person name="Kobayashi Y."/>
            <person name="Hashimoto A."/>
            <person name="Hamamoto M."/>
            <person name="Hiraoka Y."/>
            <person name="Horinouchi S."/>
            <person name="Yoshida M."/>
        </authorList>
    </citation>
    <scope>SUBCELLULAR LOCATION [LARGE SCALE ANALYSIS]</scope>
</reference>
<name>COPB_SCHPO</name>